<accession>Q6C7Q0</accession>
<proteinExistence type="inferred from homology"/>
<comment type="function">
    <text evidence="1">Mediates the reversible addition of palmitate to target proteins, thereby regulating their membrane association and biological function.</text>
</comment>
<comment type="catalytic activity">
    <reaction evidence="1">
        <text>L-cysteinyl-[protein] + hexadecanoyl-CoA = S-hexadecanoyl-L-cysteinyl-[protein] + CoA</text>
        <dbReference type="Rhea" id="RHEA:36683"/>
        <dbReference type="Rhea" id="RHEA-COMP:10131"/>
        <dbReference type="Rhea" id="RHEA-COMP:11032"/>
        <dbReference type="ChEBI" id="CHEBI:29950"/>
        <dbReference type="ChEBI" id="CHEBI:57287"/>
        <dbReference type="ChEBI" id="CHEBI:57379"/>
        <dbReference type="ChEBI" id="CHEBI:74151"/>
        <dbReference type="EC" id="2.3.1.225"/>
    </reaction>
</comment>
<comment type="subcellular location">
    <subcellularLocation>
        <location evidence="1">Endoplasmic reticulum membrane</location>
        <topology evidence="1">Multi-pass membrane protein</topology>
    </subcellularLocation>
</comment>
<comment type="domain">
    <text evidence="1">The DHHC domain is required for palmitoyltransferase activity.</text>
</comment>
<comment type="similarity">
    <text evidence="1">Belongs to the DHHC palmitoyltransferase family. PFA4 subfamily.</text>
</comment>
<gene>
    <name evidence="1" type="primary">PFA4</name>
    <name type="ordered locus">YALI0D26345g</name>
</gene>
<sequence length="342" mass="39434">MITFSNPWIGVIIPCIIIFTLSTFSAIYILPHHVSNNELTLFICASAMVWISYIIAIIVPPGSPPKNYTPPENGMKMYCLKCKAYKPERTHHSKALGVCVLKMDHHCPWTNNTVGHRNMPHFMRFLVWVDMTVGYLFIRLCIRIMKLWRDKHLPSYLFDKTEVILSIVFLPASFFVLFTVGILTIRVFVNMCNGITQIESWECDRIESLVRRKIVTEERAEFPYDIELFTNIFNAVGSPLTFWLPWGQPRGDGITFEKNESGYTEEGEPLCWPPDHVDYDPENVPLQNLKDGLRRRGEEPDCLLGGIGAGKMQAENDFYKRDHWRNVEGEKLADFGVEHTDI</sequence>
<protein>
    <recommendedName>
        <fullName evidence="1">Palmitoyltransferase PFA4</fullName>
        <ecNumber evidence="1">2.3.1.225</ecNumber>
    </recommendedName>
    <alternativeName>
        <fullName evidence="1">Protein S-acyltransferase</fullName>
        <shortName evidence="1">PAT</shortName>
    </alternativeName>
    <alternativeName>
        <fullName evidence="1">Protein fatty acyltransferase 4</fullName>
    </alternativeName>
</protein>
<feature type="chain" id="PRO_0000212971" description="Palmitoyltransferase PFA4">
    <location>
        <begin position="1"/>
        <end position="342"/>
    </location>
</feature>
<feature type="topological domain" description="Cytoplasmic" evidence="1">
    <location>
        <begin position="1"/>
        <end position="8"/>
    </location>
</feature>
<feature type="transmembrane region" description="Helical" evidence="1">
    <location>
        <begin position="9"/>
        <end position="29"/>
    </location>
</feature>
<feature type="topological domain" description="Lumenal" evidence="1">
    <location>
        <begin position="30"/>
        <end position="38"/>
    </location>
</feature>
<feature type="transmembrane region" description="Helical" evidence="1">
    <location>
        <begin position="39"/>
        <end position="59"/>
    </location>
</feature>
<feature type="topological domain" description="Cytoplasmic" evidence="1">
    <location>
        <begin position="60"/>
        <end position="124"/>
    </location>
</feature>
<feature type="transmembrane region" description="Helical" evidence="1">
    <location>
        <begin position="125"/>
        <end position="145"/>
    </location>
</feature>
<feature type="topological domain" description="Lumenal" evidence="1">
    <location>
        <begin position="146"/>
        <end position="162"/>
    </location>
</feature>
<feature type="transmembrane region" description="Helical" evidence="1">
    <location>
        <begin position="163"/>
        <end position="183"/>
    </location>
</feature>
<feature type="topological domain" description="Cytoplasmic" evidence="1">
    <location>
        <begin position="184"/>
        <end position="342"/>
    </location>
</feature>
<feature type="domain" description="DHHC" evidence="2">
    <location>
        <begin position="77"/>
        <end position="127"/>
    </location>
</feature>
<feature type="active site" description="S-palmitoyl cysteine intermediate" evidence="1">
    <location>
        <position position="107"/>
    </location>
</feature>
<keyword id="KW-0012">Acyltransferase</keyword>
<keyword id="KW-0256">Endoplasmic reticulum</keyword>
<keyword id="KW-0449">Lipoprotein</keyword>
<keyword id="KW-0472">Membrane</keyword>
<keyword id="KW-0564">Palmitate</keyword>
<keyword id="KW-1185">Reference proteome</keyword>
<keyword id="KW-0808">Transferase</keyword>
<keyword id="KW-0812">Transmembrane</keyword>
<keyword id="KW-1133">Transmembrane helix</keyword>
<reference key="1">
    <citation type="journal article" date="2004" name="Nature">
        <title>Genome evolution in yeasts.</title>
        <authorList>
            <person name="Dujon B."/>
            <person name="Sherman D."/>
            <person name="Fischer G."/>
            <person name="Durrens P."/>
            <person name="Casaregola S."/>
            <person name="Lafontaine I."/>
            <person name="de Montigny J."/>
            <person name="Marck C."/>
            <person name="Neuveglise C."/>
            <person name="Talla E."/>
            <person name="Goffard N."/>
            <person name="Frangeul L."/>
            <person name="Aigle M."/>
            <person name="Anthouard V."/>
            <person name="Babour A."/>
            <person name="Barbe V."/>
            <person name="Barnay S."/>
            <person name="Blanchin S."/>
            <person name="Beckerich J.-M."/>
            <person name="Beyne E."/>
            <person name="Bleykasten C."/>
            <person name="Boisrame A."/>
            <person name="Boyer J."/>
            <person name="Cattolico L."/>
            <person name="Confanioleri F."/>
            <person name="de Daruvar A."/>
            <person name="Despons L."/>
            <person name="Fabre E."/>
            <person name="Fairhead C."/>
            <person name="Ferry-Dumazet H."/>
            <person name="Groppi A."/>
            <person name="Hantraye F."/>
            <person name="Hennequin C."/>
            <person name="Jauniaux N."/>
            <person name="Joyet P."/>
            <person name="Kachouri R."/>
            <person name="Kerrest A."/>
            <person name="Koszul R."/>
            <person name="Lemaire M."/>
            <person name="Lesur I."/>
            <person name="Ma L."/>
            <person name="Muller H."/>
            <person name="Nicaud J.-M."/>
            <person name="Nikolski M."/>
            <person name="Oztas S."/>
            <person name="Ozier-Kalogeropoulos O."/>
            <person name="Pellenz S."/>
            <person name="Potier S."/>
            <person name="Richard G.-F."/>
            <person name="Straub M.-L."/>
            <person name="Suleau A."/>
            <person name="Swennen D."/>
            <person name="Tekaia F."/>
            <person name="Wesolowski-Louvel M."/>
            <person name="Westhof E."/>
            <person name="Wirth B."/>
            <person name="Zeniou-Meyer M."/>
            <person name="Zivanovic Y."/>
            <person name="Bolotin-Fukuhara M."/>
            <person name="Thierry A."/>
            <person name="Bouchier C."/>
            <person name="Caudron B."/>
            <person name="Scarpelli C."/>
            <person name="Gaillardin C."/>
            <person name="Weissenbach J."/>
            <person name="Wincker P."/>
            <person name="Souciet J.-L."/>
        </authorList>
    </citation>
    <scope>NUCLEOTIDE SEQUENCE [LARGE SCALE GENOMIC DNA]</scope>
    <source>
        <strain>CLIB 122 / E 150</strain>
    </source>
</reference>
<name>PFA4_YARLI</name>
<dbReference type="EC" id="2.3.1.225" evidence="1"/>
<dbReference type="EMBL" id="CR382130">
    <property type="protein sequence ID" value="CAG81518.1"/>
    <property type="molecule type" value="Genomic_DNA"/>
</dbReference>
<dbReference type="RefSeq" id="XP_503312.1">
    <property type="nucleotide sequence ID" value="XM_503312.1"/>
</dbReference>
<dbReference type="SMR" id="Q6C7Q0"/>
<dbReference type="FunCoup" id="Q6C7Q0">
    <property type="interactions" value="29"/>
</dbReference>
<dbReference type="STRING" id="284591.Q6C7Q0"/>
<dbReference type="EnsemblFungi" id="CAG81518">
    <property type="protein sequence ID" value="CAG81518"/>
    <property type="gene ID" value="YALI0_D26345g"/>
</dbReference>
<dbReference type="KEGG" id="yli:2911276"/>
<dbReference type="VEuPathDB" id="FungiDB:YALI0_D26345g"/>
<dbReference type="HOGENOM" id="CLU_027721_8_0_1"/>
<dbReference type="InParanoid" id="Q6C7Q0"/>
<dbReference type="OMA" id="TMNCVGY"/>
<dbReference type="OrthoDB" id="103295at4891"/>
<dbReference type="Proteomes" id="UP000001300">
    <property type="component" value="Chromosome D"/>
</dbReference>
<dbReference type="GO" id="GO:0005783">
    <property type="term" value="C:endoplasmic reticulum"/>
    <property type="evidence" value="ECO:0000318"/>
    <property type="project" value="GO_Central"/>
</dbReference>
<dbReference type="GO" id="GO:0005789">
    <property type="term" value="C:endoplasmic reticulum membrane"/>
    <property type="evidence" value="ECO:0007669"/>
    <property type="project" value="UniProtKB-SubCell"/>
</dbReference>
<dbReference type="GO" id="GO:0005794">
    <property type="term" value="C:Golgi apparatus"/>
    <property type="evidence" value="ECO:0000318"/>
    <property type="project" value="GO_Central"/>
</dbReference>
<dbReference type="GO" id="GO:0019706">
    <property type="term" value="F:protein-cysteine S-palmitoyltransferase activity"/>
    <property type="evidence" value="ECO:0000318"/>
    <property type="project" value="GO_Central"/>
</dbReference>
<dbReference type="GO" id="GO:0006612">
    <property type="term" value="P:protein targeting to membrane"/>
    <property type="evidence" value="ECO:0000318"/>
    <property type="project" value="GO_Central"/>
</dbReference>
<dbReference type="HAMAP" id="MF_03199">
    <property type="entry name" value="DHHC_PAT_PFA4"/>
    <property type="match status" value="1"/>
</dbReference>
<dbReference type="InterPro" id="IPR001594">
    <property type="entry name" value="Palmitoyltrfase_DHHC"/>
</dbReference>
<dbReference type="InterPro" id="IPR033682">
    <property type="entry name" value="PFA4"/>
</dbReference>
<dbReference type="InterPro" id="IPR039859">
    <property type="entry name" value="PFA4/ZDH16/20/ERF2-like"/>
</dbReference>
<dbReference type="PANTHER" id="PTHR12246">
    <property type="entry name" value="PALMITOYLTRANSFERASE ZDHHC16"/>
    <property type="match status" value="1"/>
</dbReference>
<dbReference type="Pfam" id="PF01529">
    <property type="entry name" value="DHHC"/>
    <property type="match status" value="1"/>
</dbReference>
<dbReference type="PROSITE" id="PS50216">
    <property type="entry name" value="DHHC"/>
    <property type="match status" value="1"/>
</dbReference>
<organism>
    <name type="scientific">Yarrowia lipolytica (strain CLIB 122 / E 150)</name>
    <name type="common">Yeast</name>
    <name type="synonym">Candida lipolytica</name>
    <dbReference type="NCBI Taxonomy" id="284591"/>
    <lineage>
        <taxon>Eukaryota</taxon>
        <taxon>Fungi</taxon>
        <taxon>Dikarya</taxon>
        <taxon>Ascomycota</taxon>
        <taxon>Saccharomycotina</taxon>
        <taxon>Dipodascomycetes</taxon>
        <taxon>Dipodascales</taxon>
        <taxon>Dipodascales incertae sedis</taxon>
        <taxon>Yarrowia</taxon>
    </lineage>
</organism>
<evidence type="ECO:0000255" key="1">
    <source>
        <dbReference type="HAMAP-Rule" id="MF_03199"/>
    </source>
</evidence>
<evidence type="ECO:0000255" key="2">
    <source>
        <dbReference type="PROSITE-ProRule" id="PRU00067"/>
    </source>
</evidence>